<feature type="chain" id="PRO_0000417319" description="Flowering-promoting factor 1-like protein 4">
    <location>
        <begin position="1"/>
        <end position="118"/>
    </location>
</feature>
<keyword id="KW-1185">Reference proteome</keyword>
<dbReference type="EMBL" id="AL662975">
    <property type="protein sequence ID" value="CAD39791.2"/>
    <property type="status" value="ALT_SEQ"/>
    <property type="molecule type" value="Genomic_DNA"/>
</dbReference>
<dbReference type="EMBL" id="AP008210">
    <property type="protein sequence ID" value="BAF14282.1"/>
    <property type="molecule type" value="Genomic_DNA"/>
</dbReference>
<dbReference type="EMBL" id="AP014960">
    <property type="protein sequence ID" value="BAS88379.1"/>
    <property type="molecule type" value="Genomic_DNA"/>
</dbReference>
<dbReference type="EMBL" id="CM000141">
    <property type="protein sequence ID" value="EAZ30060.1"/>
    <property type="status" value="ALT_SEQ"/>
    <property type="molecule type" value="Genomic_DNA"/>
</dbReference>
<dbReference type="EMBL" id="AK120187">
    <property type="protein sequence ID" value="BAG99910.1"/>
    <property type="molecule type" value="mRNA"/>
</dbReference>
<dbReference type="RefSeq" id="XP_015634517.1">
    <property type="nucleotide sequence ID" value="XM_015779031.1"/>
</dbReference>
<dbReference type="SMR" id="Q0JEF5"/>
<dbReference type="FunCoup" id="Q0JEF5">
    <property type="interactions" value="49"/>
</dbReference>
<dbReference type="STRING" id="39947.Q0JEF5"/>
<dbReference type="PaxDb" id="39947-Q0JEF5"/>
<dbReference type="EnsemblPlants" id="Os04t0282400-01">
    <property type="protein sequence ID" value="Os04t0282400-01"/>
    <property type="gene ID" value="Os04g0282400"/>
</dbReference>
<dbReference type="Gramene" id="Os04t0282400-01">
    <property type="protein sequence ID" value="Os04t0282400-01"/>
    <property type="gene ID" value="Os04g0282400"/>
</dbReference>
<dbReference type="KEGG" id="dosa:Os04g0282400"/>
<dbReference type="eggNOG" id="ENOG502S12G">
    <property type="taxonomic scope" value="Eukaryota"/>
</dbReference>
<dbReference type="HOGENOM" id="CLU_121629_0_1_1"/>
<dbReference type="InParanoid" id="Q0JEF5"/>
<dbReference type="OMA" id="TKYYQST"/>
<dbReference type="OrthoDB" id="612242at2759"/>
<dbReference type="Proteomes" id="UP000000763">
    <property type="component" value="Chromosome 4"/>
</dbReference>
<dbReference type="Proteomes" id="UP000007752">
    <property type="component" value="Chromosome 4"/>
</dbReference>
<dbReference type="Proteomes" id="UP000059680">
    <property type="component" value="Chromosome 4"/>
</dbReference>
<dbReference type="GO" id="GO:0009909">
    <property type="term" value="P:regulation of flower development"/>
    <property type="evidence" value="ECO:0007669"/>
    <property type="project" value="InterPro"/>
</dbReference>
<dbReference type="InterPro" id="IPR039274">
    <property type="entry name" value="FPF1"/>
</dbReference>
<dbReference type="PANTHER" id="PTHR33433">
    <property type="entry name" value="FLOWERING-PROMOTING FACTOR 1-LIKE PROTEIN 1"/>
    <property type="match status" value="1"/>
</dbReference>
<organism>
    <name type="scientific">Oryza sativa subsp. japonica</name>
    <name type="common">Rice</name>
    <dbReference type="NCBI Taxonomy" id="39947"/>
    <lineage>
        <taxon>Eukaryota</taxon>
        <taxon>Viridiplantae</taxon>
        <taxon>Streptophyta</taxon>
        <taxon>Embryophyta</taxon>
        <taxon>Tracheophyta</taxon>
        <taxon>Spermatophyta</taxon>
        <taxon>Magnoliopsida</taxon>
        <taxon>Liliopsida</taxon>
        <taxon>Poales</taxon>
        <taxon>Poaceae</taxon>
        <taxon>BOP clade</taxon>
        <taxon>Oryzoideae</taxon>
        <taxon>Oryzeae</taxon>
        <taxon>Oryzinae</taxon>
        <taxon>Oryza</taxon>
        <taxon>Oryza sativa</taxon>
    </lineage>
</organism>
<evidence type="ECO:0000305" key="1"/>
<name>FLP4_ORYSJ</name>
<proteinExistence type="inferred from homology"/>
<protein>
    <recommendedName>
        <fullName>Flowering-promoting factor 1-like protein 4</fullName>
    </recommendedName>
    <alternativeName>
        <fullName>FPF1-like protein 4</fullName>
    </alternativeName>
</protein>
<accession>Q0JEF5</accession>
<accession>A0A0P0W8G5</accession>
<accession>Q7XX25</accession>
<comment type="similarity">
    <text evidence="1">Belongs to the FPF1 family.</text>
</comment>
<comment type="sequence caution" evidence="1">
    <conflict type="erroneous gene model prediction">
        <sequence resource="EMBL-CDS" id="CAD39791"/>
    </conflict>
</comment>
<comment type="sequence caution" evidence="1">
    <conflict type="erroneous gene model prediction">
        <sequence resource="EMBL-CDS" id="EAZ30060"/>
    </conflict>
</comment>
<gene>
    <name type="ordered locus">Os04g0282400</name>
    <name type="ordered locus">LOC_Os04g21350</name>
    <name type="ORF">OsJ_14120</name>
    <name type="ORF">OSJNBa0071G03.4</name>
</gene>
<sequence length="118" mass="13149">MAGVWVFEDGMVRRADSEAPSRGRGVGGGGGGGKVLVHVPSSEVVTSYEVLERRLRELGWERYLNDPCLLQFHQRSTVHLISVPRDFSRLKLVHMYDVVVKTRNVFEVRDAATTASPP</sequence>
<reference key="1">
    <citation type="journal article" date="2002" name="Nature">
        <title>Sequence and analysis of rice chromosome 4.</title>
        <authorList>
            <person name="Feng Q."/>
            <person name="Zhang Y."/>
            <person name="Hao P."/>
            <person name="Wang S."/>
            <person name="Fu G."/>
            <person name="Huang Y."/>
            <person name="Li Y."/>
            <person name="Zhu J."/>
            <person name="Liu Y."/>
            <person name="Hu X."/>
            <person name="Jia P."/>
            <person name="Zhang Y."/>
            <person name="Zhao Q."/>
            <person name="Ying K."/>
            <person name="Yu S."/>
            <person name="Tang Y."/>
            <person name="Weng Q."/>
            <person name="Zhang L."/>
            <person name="Lu Y."/>
            <person name="Mu J."/>
            <person name="Lu Y."/>
            <person name="Zhang L.S."/>
            <person name="Yu Z."/>
            <person name="Fan D."/>
            <person name="Liu X."/>
            <person name="Lu T."/>
            <person name="Li C."/>
            <person name="Wu Y."/>
            <person name="Sun T."/>
            <person name="Lei H."/>
            <person name="Li T."/>
            <person name="Hu H."/>
            <person name="Guan J."/>
            <person name="Wu M."/>
            <person name="Zhang R."/>
            <person name="Zhou B."/>
            <person name="Chen Z."/>
            <person name="Chen L."/>
            <person name="Jin Z."/>
            <person name="Wang R."/>
            <person name="Yin H."/>
            <person name="Cai Z."/>
            <person name="Ren S."/>
            <person name="Lv G."/>
            <person name="Gu W."/>
            <person name="Zhu G."/>
            <person name="Tu Y."/>
            <person name="Jia J."/>
            <person name="Zhang Y."/>
            <person name="Chen J."/>
            <person name="Kang H."/>
            <person name="Chen X."/>
            <person name="Shao C."/>
            <person name="Sun Y."/>
            <person name="Hu Q."/>
            <person name="Zhang X."/>
            <person name="Zhang W."/>
            <person name="Wang L."/>
            <person name="Ding C."/>
            <person name="Sheng H."/>
            <person name="Gu J."/>
            <person name="Chen S."/>
            <person name="Ni L."/>
            <person name="Zhu F."/>
            <person name="Chen W."/>
            <person name="Lan L."/>
            <person name="Lai Y."/>
            <person name="Cheng Z."/>
            <person name="Gu M."/>
            <person name="Jiang J."/>
            <person name="Li J."/>
            <person name="Hong G."/>
            <person name="Xue Y."/>
            <person name="Han B."/>
        </authorList>
    </citation>
    <scope>NUCLEOTIDE SEQUENCE [LARGE SCALE GENOMIC DNA]</scope>
    <source>
        <strain>cv. Nipponbare</strain>
    </source>
</reference>
<reference key="2">
    <citation type="journal article" date="2005" name="Nature">
        <title>The map-based sequence of the rice genome.</title>
        <authorList>
            <consortium name="International rice genome sequencing project (IRGSP)"/>
        </authorList>
    </citation>
    <scope>NUCLEOTIDE SEQUENCE [LARGE SCALE GENOMIC DNA]</scope>
    <source>
        <strain>cv. Nipponbare</strain>
    </source>
</reference>
<reference key="3">
    <citation type="journal article" date="2008" name="Nucleic Acids Res.">
        <title>The rice annotation project database (RAP-DB): 2008 update.</title>
        <authorList>
            <consortium name="The rice annotation project (RAP)"/>
        </authorList>
    </citation>
    <scope>GENOME REANNOTATION</scope>
    <source>
        <strain>cv. Nipponbare</strain>
    </source>
</reference>
<reference key="4">
    <citation type="journal article" date="2013" name="Rice">
        <title>Improvement of the Oryza sativa Nipponbare reference genome using next generation sequence and optical map data.</title>
        <authorList>
            <person name="Kawahara Y."/>
            <person name="de la Bastide M."/>
            <person name="Hamilton J.P."/>
            <person name="Kanamori H."/>
            <person name="McCombie W.R."/>
            <person name="Ouyang S."/>
            <person name="Schwartz D.C."/>
            <person name="Tanaka T."/>
            <person name="Wu J."/>
            <person name="Zhou S."/>
            <person name="Childs K.L."/>
            <person name="Davidson R.M."/>
            <person name="Lin H."/>
            <person name="Quesada-Ocampo L."/>
            <person name="Vaillancourt B."/>
            <person name="Sakai H."/>
            <person name="Lee S.S."/>
            <person name="Kim J."/>
            <person name="Numa H."/>
            <person name="Itoh T."/>
            <person name="Buell C.R."/>
            <person name="Matsumoto T."/>
        </authorList>
    </citation>
    <scope>GENOME REANNOTATION</scope>
    <source>
        <strain>cv. Nipponbare</strain>
    </source>
</reference>
<reference key="5">
    <citation type="journal article" date="2005" name="PLoS Biol.">
        <title>The genomes of Oryza sativa: a history of duplications.</title>
        <authorList>
            <person name="Yu J."/>
            <person name="Wang J."/>
            <person name="Lin W."/>
            <person name="Li S."/>
            <person name="Li H."/>
            <person name="Zhou J."/>
            <person name="Ni P."/>
            <person name="Dong W."/>
            <person name="Hu S."/>
            <person name="Zeng C."/>
            <person name="Zhang J."/>
            <person name="Zhang Y."/>
            <person name="Li R."/>
            <person name="Xu Z."/>
            <person name="Li S."/>
            <person name="Li X."/>
            <person name="Zheng H."/>
            <person name="Cong L."/>
            <person name="Lin L."/>
            <person name="Yin J."/>
            <person name="Geng J."/>
            <person name="Li G."/>
            <person name="Shi J."/>
            <person name="Liu J."/>
            <person name="Lv H."/>
            <person name="Li J."/>
            <person name="Wang J."/>
            <person name="Deng Y."/>
            <person name="Ran L."/>
            <person name="Shi X."/>
            <person name="Wang X."/>
            <person name="Wu Q."/>
            <person name="Li C."/>
            <person name="Ren X."/>
            <person name="Wang J."/>
            <person name="Wang X."/>
            <person name="Li D."/>
            <person name="Liu D."/>
            <person name="Zhang X."/>
            <person name="Ji Z."/>
            <person name="Zhao W."/>
            <person name="Sun Y."/>
            <person name="Zhang Z."/>
            <person name="Bao J."/>
            <person name="Han Y."/>
            <person name="Dong L."/>
            <person name="Ji J."/>
            <person name="Chen P."/>
            <person name="Wu S."/>
            <person name="Liu J."/>
            <person name="Xiao Y."/>
            <person name="Bu D."/>
            <person name="Tan J."/>
            <person name="Yang L."/>
            <person name="Ye C."/>
            <person name="Zhang J."/>
            <person name="Xu J."/>
            <person name="Zhou Y."/>
            <person name="Yu Y."/>
            <person name="Zhang B."/>
            <person name="Zhuang S."/>
            <person name="Wei H."/>
            <person name="Liu B."/>
            <person name="Lei M."/>
            <person name="Yu H."/>
            <person name="Li Y."/>
            <person name="Xu H."/>
            <person name="Wei S."/>
            <person name="He X."/>
            <person name="Fang L."/>
            <person name="Zhang Z."/>
            <person name="Zhang Y."/>
            <person name="Huang X."/>
            <person name="Su Z."/>
            <person name="Tong W."/>
            <person name="Li J."/>
            <person name="Tong Z."/>
            <person name="Li S."/>
            <person name="Ye J."/>
            <person name="Wang L."/>
            <person name="Fang L."/>
            <person name="Lei T."/>
            <person name="Chen C.-S."/>
            <person name="Chen H.-C."/>
            <person name="Xu Z."/>
            <person name="Li H."/>
            <person name="Huang H."/>
            <person name="Zhang F."/>
            <person name="Xu H."/>
            <person name="Li N."/>
            <person name="Zhao C."/>
            <person name="Li S."/>
            <person name="Dong L."/>
            <person name="Huang Y."/>
            <person name="Li L."/>
            <person name="Xi Y."/>
            <person name="Qi Q."/>
            <person name="Li W."/>
            <person name="Zhang B."/>
            <person name="Hu W."/>
            <person name="Zhang Y."/>
            <person name="Tian X."/>
            <person name="Jiao Y."/>
            <person name="Liang X."/>
            <person name="Jin J."/>
            <person name="Gao L."/>
            <person name="Zheng W."/>
            <person name="Hao B."/>
            <person name="Liu S.-M."/>
            <person name="Wang W."/>
            <person name="Yuan L."/>
            <person name="Cao M."/>
            <person name="McDermott J."/>
            <person name="Samudrala R."/>
            <person name="Wang J."/>
            <person name="Wong G.K.-S."/>
            <person name="Yang H."/>
        </authorList>
    </citation>
    <scope>NUCLEOTIDE SEQUENCE [LARGE SCALE GENOMIC DNA]</scope>
    <source>
        <strain>cv. Nipponbare</strain>
    </source>
</reference>
<reference key="6">
    <citation type="journal article" date="2003" name="Science">
        <title>Collection, mapping, and annotation of over 28,000 cDNA clones from japonica rice.</title>
        <authorList>
            <consortium name="The rice full-length cDNA consortium"/>
        </authorList>
    </citation>
    <scope>NUCLEOTIDE SEQUENCE [LARGE SCALE MRNA]</scope>
    <source>
        <strain>cv. Nipponbare</strain>
    </source>
</reference>